<dbReference type="EMBL" id="CP000539">
    <property type="protein sequence ID" value="ABM41032.1"/>
    <property type="molecule type" value="Genomic_DNA"/>
</dbReference>
<dbReference type="SMR" id="A1W457"/>
<dbReference type="STRING" id="232721.Ajs_0788"/>
<dbReference type="KEGG" id="ajs:Ajs_0788"/>
<dbReference type="eggNOG" id="COG1970">
    <property type="taxonomic scope" value="Bacteria"/>
</dbReference>
<dbReference type="HOGENOM" id="CLU_095787_0_1_4"/>
<dbReference type="Proteomes" id="UP000000645">
    <property type="component" value="Chromosome"/>
</dbReference>
<dbReference type="GO" id="GO:0005886">
    <property type="term" value="C:plasma membrane"/>
    <property type="evidence" value="ECO:0007669"/>
    <property type="project" value="UniProtKB-SubCell"/>
</dbReference>
<dbReference type="GO" id="GO:0008381">
    <property type="term" value="F:mechanosensitive monoatomic ion channel activity"/>
    <property type="evidence" value="ECO:0007669"/>
    <property type="project" value="UniProtKB-UniRule"/>
</dbReference>
<dbReference type="Gene3D" id="1.10.1200.120">
    <property type="entry name" value="Large-conductance mechanosensitive channel, MscL, domain 1"/>
    <property type="match status" value="1"/>
</dbReference>
<dbReference type="HAMAP" id="MF_00115">
    <property type="entry name" value="MscL"/>
    <property type="match status" value="1"/>
</dbReference>
<dbReference type="InterPro" id="IPR019823">
    <property type="entry name" value="Mechanosensitive_channel_CS"/>
</dbReference>
<dbReference type="InterPro" id="IPR001185">
    <property type="entry name" value="MS_channel"/>
</dbReference>
<dbReference type="InterPro" id="IPR037673">
    <property type="entry name" value="MSC/AndL"/>
</dbReference>
<dbReference type="InterPro" id="IPR036019">
    <property type="entry name" value="MscL_channel"/>
</dbReference>
<dbReference type="NCBIfam" id="TIGR00220">
    <property type="entry name" value="mscL"/>
    <property type="match status" value="1"/>
</dbReference>
<dbReference type="NCBIfam" id="NF001843">
    <property type="entry name" value="PRK00567.1-4"/>
    <property type="match status" value="1"/>
</dbReference>
<dbReference type="NCBIfam" id="NF010557">
    <property type="entry name" value="PRK13952.1"/>
    <property type="match status" value="1"/>
</dbReference>
<dbReference type="PANTHER" id="PTHR30266:SF2">
    <property type="entry name" value="LARGE-CONDUCTANCE MECHANOSENSITIVE CHANNEL"/>
    <property type="match status" value="1"/>
</dbReference>
<dbReference type="PANTHER" id="PTHR30266">
    <property type="entry name" value="MECHANOSENSITIVE CHANNEL MSCL"/>
    <property type="match status" value="1"/>
</dbReference>
<dbReference type="Pfam" id="PF01741">
    <property type="entry name" value="MscL"/>
    <property type="match status" value="1"/>
</dbReference>
<dbReference type="PRINTS" id="PR01264">
    <property type="entry name" value="MECHCHANNEL"/>
</dbReference>
<dbReference type="SUPFAM" id="SSF81330">
    <property type="entry name" value="Gated mechanosensitive channel"/>
    <property type="match status" value="1"/>
</dbReference>
<dbReference type="PROSITE" id="PS01327">
    <property type="entry name" value="MSCL"/>
    <property type="match status" value="1"/>
</dbReference>
<name>MSCL_ACISJ</name>
<reference key="1">
    <citation type="submission" date="2006-12" db="EMBL/GenBank/DDBJ databases">
        <title>Complete sequence of chromosome 1 of Acidovorax sp. JS42.</title>
        <authorList>
            <person name="Copeland A."/>
            <person name="Lucas S."/>
            <person name="Lapidus A."/>
            <person name="Barry K."/>
            <person name="Detter J.C."/>
            <person name="Glavina del Rio T."/>
            <person name="Dalin E."/>
            <person name="Tice H."/>
            <person name="Pitluck S."/>
            <person name="Chertkov O."/>
            <person name="Brettin T."/>
            <person name="Bruce D."/>
            <person name="Han C."/>
            <person name="Tapia R."/>
            <person name="Gilna P."/>
            <person name="Schmutz J."/>
            <person name="Larimer F."/>
            <person name="Land M."/>
            <person name="Hauser L."/>
            <person name="Kyrpides N."/>
            <person name="Kim E."/>
            <person name="Stahl D."/>
            <person name="Richardson P."/>
        </authorList>
    </citation>
    <scope>NUCLEOTIDE SEQUENCE [LARGE SCALE GENOMIC DNA]</scope>
    <source>
        <strain>JS42</strain>
    </source>
</reference>
<keyword id="KW-0997">Cell inner membrane</keyword>
<keyword id="KW-1003">Cell membrane</keyword>
<keyword id="KW-0407">Ion channel</keyword>
<keyword id="KW-0406">Ion transport</keyword>
<keyword id="KW-0472">Membrane</keyword>
<keyword id="KW-0812">Transmembrane</keyword>
<keyword id="KW-1133">Transmembrane helix</keyword>
<keyword id="KW-0813">Transport</keyword>
<sequence>MGIAKEFREFAVKGNVIDLAVGVIIGGAFGKIVDSVVSDLIMPVVGLVFGKLDFSNLFIVLGSVPEGTPYTLEAIRKAGVPVLAYGNFITVAVNFVILAFIIFVMVKQINRLKRETPVEPPAPPATPEDIQLLREIRDSLKR</sequence>
<gene>
    <name evidence="1" type="primary">mscL</name>
    <name type="ordered locus">Ajs_0788</name>
</gene>
<proteinExistence type="inferred from homology"/>
<feature type="chain" id="PRO_1000015346" description="Large-conductance mechanosensitive channel">
    <location>
        <begin position="1"/>
        <end position="142"/>
    </location>
</feature>
<feature type="transmembrane region" description="Helical" evidence="1">
    <location>
        <begin position="10"/>
        <end position="30"/>
    </location>
</feature>
<feature type="transmembrane region" description="Helical" evidence="1">
    <location>
        <begin position="40"/>
        <end position="60"/>
    </location>
</feature>
<feature type="transmembrane region" description="Helical" evidence="1">
    <location>
        <begin position="86"/>
        <end position="106"/>
    </location>
</feature>
<organism>
    <name type="scientific">Acidovorax sp. (strain JS42)</name>
    <dbReference type="NCBI Taxonomy" id="232721"/>
    <lineage>
        <taxon>Bacteria</taxon>
        <taxon>Pseudomonadati</taxon>
        <taxon>Pseudomonadota</taxon>
        <taxon>Betaproteobacteria</taxon>
        <taxon>Burkholderiales</taxon>
        <taxon>Comamonadaceae</taxon>
        <taxon>Acidovorax</taxon>
    </lineage>
</organism>
<accession>A1W457</accession>
<protein>
    <recommendedName>
        <fullName evidence="1">Large-conductance mechanosensitive channel</fullName>
    </recommendedName>
</protein>
<evidence type="ECO:0000255" key="1">
    <source>
        <dbReference type="HAMAP-Rule" id="MF_00115"/>
    </source>
</evidence>
<comment type="function">
    <text evidence="1">Channel that opens in response to stretch forces in the membrane lipid bilayer. May participate in the regulation of osmotic pressure changes within the cell.</text>
</comment>
<comment type="subunit">
    <text evidence="1">Homopentamer.</text>
</comment>
<comment type="subcellular location">
    <subcellularLocation>
        <location evidence="1">Cell inner membrane</location>
        <topology evidence="1">Multi-pass membrane protein</topology>
    </subcellularLocation>
</comment>
<comment type="similarity">
    <text evidence="1">Belongs to the MscL family.</text>
</comment>